<gene>
    <name evidence="1" type="primary">rsmH</name>
    <name type="synonym">mraW</name>
    <name type="ordered locus">MAG3730</name>
</gene>
<proteinExistence type="inferred from homology"/>
<organism>
    <name type="scientific">Mycoplasmopsis agalactiae (strain NCTC 10123 / CIP 59.7 / PG2)</name>
    <name type="common">Mycoplasma agalactiae</name>
    <dbReference type="NCBI Taxonomy" id="347257"/>
    <lineage>
        <taxon>Bacteria</taxon>
        <taxon>Bacillati</taxon>
        <taxon>Mycoplasmatota</taxon>
        <taxon>Mycoplasmoidales</taxon>
        <taxon>Metamycoplasmataceae</taxon>
        <taxon>Mycoplasmopsis</taxon>
    </lineage>
</organism>
<evidence type="ECO:0000255" key="1">
    <source>
        <dbReference type="HAMAP-Rule" id="MF_01007"/>
    </source>
</evidence>
<sequence length="300" mass="33638">MENKHIPILLNEAIKSLNIKSDGIYLDLTVGMGGHSSEILKRLKNGLLVGFDKDLFAIEESRKRLSKIGSNFQLIHSDFNNVADELAKLNINAVDGILVDLGISSPQVDNAERGFSYSKDARLDMRMNTNQALDAHFVVNTYSEDELITIFYNYAEVKLAKQVANAIIKNRPINTTLELAEVIKSAYPAKLLSLKNPCKAVFQAIRIEVNNEFSSINSMLVQALNLLKKDSSLAIITFHSLEDSIIKKFFGNLIKSKHPSKMPIKEEKKYIVKVYSPSKAEISENNRSRSAKLRVLTKLI</sequence>
<feature type="chain" id="PRO_0000386998" description="Ribosomal RNA small subunit methyltransferase H">
    <location>
        <begin position="1"/>
        <end position="300"/>
    </location>
</feature>
<feature type="binding site" evidence="1">
    <location>
        <begin position="33"/>
        <end position="35"/>
    </location>
    <ligand>
        <name>S-adenosyl-L-methionine</name>
        <dbReference type="ChEBI" id="CHEBI:59789"/>
    </ligand>
</feature>
<feature type="binding site" evidence="1">
    <location>
        <position position="52"/>
    </location>
    <ligand>
        <name>S-adenosyl-L-methionine</name>
        <dbReference type="ChEBI" id="CHEBI:59789"/>
    </ligand>
</feature>
<feature type="binding site" evidence="1">
    <location>
        <position position="79"/>
    </location>
    <ligand>
        <name>S-adenosyl-L-methionine</name>
        <dbReference type="ChEBI" id="CHEBI:59789"/>
    </ligand>
</feature>
<feature type="binding site" evidence="1">
    <location>
        <position position="100"/>
    </location>
    <ligand>
        <name>S-adenosyl-L-methionine</name>
        <dbReference type="ChEBI" id="CHEBI:59789"/>
    </ligand>
</feature>
<feature type="binding site" evidence="1">
    <location>
        <position position="107"/>
    </location>
    <ligand>
        <name>S-adenosyl-L-methionine</name>
        <dbReference type="ChEBI" id="CHEBI:59789"/>
    </ligand>
</feature>
<accession>A5IYG2</accession>
<comment type="function">
    <text evidence="1">Specifically methylates the N4 position of cytidine in position 1402 (C1402) of 16S rRNA.</text>
</comment>
<comment type="catalytic activity">
    <reaction evidence="1">
        <text>cytidine(1402) in 16S rRNA + S-adenosyl-L-methionine = N(4)-methylcytidine(1402) in 16S rRNA + S-adenosyl-L-homocysteine + H(+)</text>
        <dbReference type="Rhea" id="RHEA:42928"/>
        <dbReference type="Rhea" id="RHEA-COMP:10286"/>
        <dbReference type="Rhea" id="RHEA-COMP:10287"/>
        <dbReference type="ChEBI" id="CHEBI:15378"/>
        <dbReference type="ChEBI" id="CHEBI:57856"/>
        <dbReference type="ChEBI" id="CHEBI:59789"/>
        <dbReference type="ChEBI" id="CHEBI:74506"/>
        <dbReference type="ChEBI" id="CHEBI:82748"/>
        <dbReference type="EC" id="2.1.1.199"/>
    </reaction>
</comment>
<comment type="subcellular location">
    <subcellularLocation>
        <location evidence="1">Cytoplasm</location>
    </subcellularLocation>
</comment>
<comment type="similarity">
    <text evidence="1">Belongs to the methyltransferase superfamily. RsmH family.</text>
</comment>
<name>RSMH_MYCAP</name>
<dbReference type="EC" id="2.1.1.199" evidence="1"/>
<dbReference type="EMBL" id="CU179680">
    <property type="protein sequence ID" value="CAL59071.1"/>
    <property type="molecule type" value="Genomic_DNA"/>
</dbReference>
<dbReference type="RefSeq" id="WP_011949546.1">
    <property type="nucleotide sequence ID" value="NC_009497.1"/>
</dbReference>
<dbReference type="SMR" id="A5IYG2"/>
<dbReference type="STRING" id="347257.MAG3730"/>
<dbReference type="GeneID" id="93358132"/>
<dbReference type="KEGG" id="maa:MAG3730"/>
<dbReference type="HOGENOM" id="CLU_038422_2_0_14"/>
<dbReference type="Proteomes" id="UP000007065">
    <property type="component" value="Chromosome"/>
</dbReference>
<dbReference type="GO" id="GO:0005737">
    <property type="term" value="C:cytoplasm"/>
    <property type="evidence" value="ECO:0007669"/>
    <property type="project" value="UniProtKB-SubCell"/>
</dbReference>
<dbReference type="GO" id="GO:0071424">
    <property type="term" value="F:rRNA (cytosine-N4-)-methyltransferase activity"/>
    <property type="evidence" value="ECO:0007669"/>
    <property type="project" value="UniProtKB-UniRule"/>
</dbReference>
<dbReference type="GO" id="GO:0070475">
    <property type="term" value="P:rRNA base methylation"/>
    <property type="evidence" value="ECO:0007669"/>
    <property type="project" value="UniProtKB-UniRule"/>
</dbReference>
<dbReference type="Gene3D" id="1.10.150.170">
    <property type="entry name" value="Putative methyltransferase TM0872, insert domain"/>
    <property type="match status" value="1"/>
</dbReference>
<dbReference type="Gene3D" id="3.40.50.150">
    <property type="entry name" value="Vaccinia Virus protein VP39"/>
    <property type="match status" value="1"/>
</dbReference>
<dbReference type="HAMAP" id="MF_01007">
    <property type="entry name" value="16SrRNA_methyltr_H"/>
    <property type="match status" value="1"/>
</dbReference>
<dbReference type="InterPro" id="IPR002903">
    <property type="entry name" value="RsmH"/>
</dbReference>
<dbReference type="InterPro" id="IPR023397">
    <property type="entry name" value="SAM-dep_MeTrfase_MraW_recog"/>
</dbReference>
<dbReference type="InterPro" id="IPR029063">
    <property type="entry name" value="SAM-dependent_MTases_sf"/>
</dbReference>
<dbReference type="NCBIfam" id="TIGR00006">
    <property type="entry name" value="16S rRNA (cytosine(1402)-N(4))-methyltransferase RsmH"/>
    <property type="match status" value="1"/>
</dbReference>
<dbReference type="PANTHER" id="PTHR11265:SF0">
    <property type="entry name" value="12S RRNA N4-METHYLCYTIDINE METHYLTRANSFERASE"/>
    <property type="match status" value="1"/>
</dbReference>
<dbReference type="PANTHER" id="PTHR11265">
    <property type="entry name" value="S-ADENOSYL-METHYLTRANSFERASE MRAW"/>
    <property type="match status" value="1"/>
</dbReference>
<dbReference type="Pfam" id="PF01795">
    <property type="entry name" value="Methyltransf_5"/>
    <property type="match status" value="1"/>
</dbReference>
<dbReference type="PIRSF" id="PIRSF004486">
    <property type="entry name" value="MraW"/>
    <property type="match status" value="1"/>
</dbReference>
<dbReference type="SUPFAM" id="SSF81799">
    <property type="entry name" value="Putative methyltransferase TM0872, insert domain"/>
    <property type="match status" value="1"/>
</dbReference>
<dbReference type="SUPFAM" id="SSF53335">
    <property type="entry name" value="S-adenosyl-L-methionine-dependent methyltransferases"/>
    <property type="match status" value="1"/>
</dbReference>
<protein>
    <recommendedName>
        <fullName evidence="1">Ribosomal RNA small subunit methyltransferase H</fullName>
        <ecNumber evidence="1">2.1.1.199</ecNumber>
    </recommendedName>
    <alternativeName>
        <fullName evidence="1">16S rRNA m(4)C1402 methyltransferase</fullName>
    </alternativeName>
    <alternativeName>
        <fullName evidence="1">rRNA (cytosine-N(4)-)-methyltransferase RsmH</fullName>
    </alternativeName>
</protein>
<keyword id="KW-0963">Cytoplasm</keyword>
<keyword id="KW-0489">Methyltransferase</keyword>
<keyword id="KW-1185">Reference proteome</keyword>
<keyword id="KW-0698">rRNA processing</keyword>
<keyword id="KW-0949">S-adenosyl-L-methionine</keyword>
<keyword id="KW-0808">Transferase</keyword>
<reference key="1">
    <citation type="journal article" date="2007" name="PLoS Genet.">
        <title>Being pathogenic, plastic, and sexual while living with a nearly minimal bacterial genome.</title>
        <authorList>
            <person name="Sirand-Pugnet P."/>
            <person name="Lartigue C."/>
            <person name="Marenda M."/>
            <person name="Jacob D."/>
            <person name="Barre A."/>
            <person name="Barbe V."/>
            <person name="Schenowitz C."/>
            <person name="Mangenot S."/>
            <person name="Couloux A."/>
            <person name="Segurens B."/>
            <person name="de Daruvar A."/>
            <person name="Blanchard A."/>
            <person name="Citti C."/>
        </authorList>
    </citation>
    <scope>NUCLEOTIDE SEQUENCE [LARGE SCALE GENOMIC DNA]</scope>
    <source>
        <strain>NCTC 10123 / CIP 59.7 / PG2</strain>
    </source>
</reference>